<organism>
    <name type="scientific">Cyanothece sp. (strain PCC 7425 / ATCC 29141)</name>
    <dbReference type="NCBI Taxonomy" id="395961"/>
    <lineage>
        <taxon>Bacteria</taxon>
        <taxon>Bacillati</taxon>
        <taxon>Cyanobacteriota</taxon>
        <taxon>Cyanophyceae</taxon>
        <taxon>Gomontiellales</taxon>
        <taxon>Cyanothecaceae</taxon>
        <taxon>Cyanothece</taxon>
    </lineage>
</organism>
<reference key="1">
    <citation type="journal article" date="2011" name="MBio">
        <title>Novel metabolic attributes of the genus Cyanothece, comprising a group of unicellular nitrogen-fixing Cyanobacteria.</title>
        <authorList>
            <person name="Bandyopadhyay A."/>
            <person name="Elvitigala T."/>
            <person name="Welsh E."/>
            <person name="Stockel J."/>
            <person name="Liberton M."/>
            <person name="Min H."/>
            <person name="Sherman L.A."/>
            <person name="Pakrasi H.B."/>
        </authorList>
    </citation>
    <scope>NUCLEOTIDE SEQUENCE [LARGE SCALE GENOMIC DNA]</scope>
    <source>
        <strain>PCC 7425 / ATCC 29141</strain>
    </source>
</reference>
<keyword id="KW-0687">Ribonucleoprotein</keyword>
<keyword id="KW-0689">Ribosomal protein</keyword>
<keyword id="KW-0694">RNA-binding</keyword>
<keyword id="KW-0699">rRNA-binding</keyword>
<name>RS11_CYAP4</name>
<protein>
    <recommendedName>
        <fullName evidence="1">Small ribosomal subunit protein uS11</fullName>
    </recommendedName>
    <alternativeName>
        <fullName evidence="2">30S ribosomal protein S11</fullName>
    </alternativeName>
</protein>
<sequence>MPQQPTKRTGGVRKQKRNVPNGVAHIQSTFNNTIVTISDVAGEVISWASAGSSGFKGAKKGTPFAAQTAAESAARRAIDQGMRQIEVMVSGPGAGRETAIRALQGAGLEITLIRDVTPIPHNGCRPPKRRRV</sequence>
<accession>B8HMS7</accession>
<gene>
    <name evidence="1" type="primary">rpsK</name>
    <name evidence="1" type="synonym">rps11</name>
    <name type="ordered locus">Cyan7425_1315</name>
</gene>
<evidence type="ECO:0000255" key="1">
    <source>
        <dbReference type="HAMAP-Rule" id="MF_01310"/>
    </source>
</evidence>
<evidence type="ECO:0000305" key="2"/>
<feature type="chain" id="PRO_1000165542" description="Small ribosomal subunit protein uS11">
    <location>
        <begin position="1"/>
        <end position="132"/>
    </location>
</feature>
<dbReference type="EMBL" id="CP001344">
    <property type="protein sequence ID" value="ACL43692.1"/>
    <property type="molecule type" value="Genomic_DNA"/>
</dbReference>
<dbReference type="SMR" id="B8HMS7"/>
<dbReference type="STRING" id="395961.Cyan7425_1315"/>
<dbReference type="KEGG" id="cyn:Cyan7425_1315"/>
<dbReference type="eggNOG" id="COG0100">
    <property type="taxonomic scope" value="Bacteria"/>
</dbReference>
<dbReference type="HOGENOM" id="CLU_072439_5_0_3"/>
<dbReference type="OrthoDB" id="9806415at2"/>
<dbReference type="GO" id="GO:1990904">
    <property type="term" value="C:ribonucleoprotein complex"/>
    <property type="evidence" value="ECO:0007669"/>
    <property type="project" value="UniProtKB-KW"/>
</dbReference>
<dbReference type="GO" id="GO:0005840">
    <property type="term" value="C:ribosome"/>
    <property type="evidence" value="ECO:0007669"/>
    <property type="project" value="UniProtKB-KW"/>
</dbReference>
<dbReference type="GO" id="GO:0019843">
    <property type="term" value="F:rRNA binding"/>
    <property type="evidence" value="ECO:0007669"/>
    <property type="project" value="UniProtKB-UniRule"/>
</dbReference>
<dbReference type="GO" id="GO:0003735">
    <property type="term" value="F:structural constituent of ribosome"/>
    <property type="evidence" value="ECO:0007669"/>
    <property type="project" value="InterPro"/>
</dbReference>
<dbReference type="GO" id="GO:0006412">
    <property type="term" value="P:translation"/>
    <property type="evidence" value="ECO:0007669"/>
    <property type="project" value="UniProtKB-UniRule"/>
</dbReference>
<dbReference type="FunFam" id="3.30.420.80:FF:000001">
    <property type="entry name" value="30S ribosomal protein S11"/>
    <property type="match status" value="1"/>
</dbReference>
<dbReference type="Gene3D" id="3.30.420.80">
    <property type="entry name" value="Ribosomal protein S11"/>
    <property type="match status" value="1"/>
</dbReference>
<dbReference type="HAMAP" id="MF_01310">
    <property type="entry name" value="Ribosomal_uS11"/>
    <property type="match status" value="1"/>
</dbReference>
<dbReference type="InterPro" id="IPR001971">
    <property type="entry name" value="Ribosomal_uS11"/>
</dbReference>
<dbReference type="InterPro" id="IPR019981">
    <property type="entry name" value="Ribosomal_uS11_bac-type"/>
</dbReference>
<dbReference type="InterPro" id="IPR018102">
    <property type="entry name" value="Ribosomal_uS11_CS"/>
</dbReference>
<dbReference type="InterPro" id="IPR036967">
    <property type="entry name" value="Ribosomal_uS11_sf"/>
</dbReference>
<dbReference type="NCBIfam" id="NF003698">
    <property type="entry name" value="PRK05309.1"/>
    <property type="match status" value="1"/>
</dbReference>
<dbReference type="NCBIfam" id="TIGR03632">
    <property type="entry name" value="uS11_bact"/>
    <property type="match status" value="1"/>
</dbReference>
<dbReference type="PANTHER" id="PTHR11759">
    <property type="entry name" value="40S RIBOSOMAL PROTEIN S14/30S RIBOSOMAL PROTEIN S11"/>
    <property type="match status" value="1"/>
</dbReference>
<dbReference type="Pfam" id="PF00411">
    <property type="entry name" value="Ribosomal_S11"/>
    <property type="match status" value="1"/>
</dbReference>
<dbReference type="PIRSF" id="PIRSF002131">
    <property type="entry name" value="Ribosomal_S11"/>
    <property type="match status" value="1"/>
</dbReference>
<dbReference type="SUPFAM" id="SSF53137">
    <property type="entry name" value="Translational machinery components"/>
    <property type="match status" value="1"/>
</dbReference>
<dbReference type="PROSITE" id="PS00054">
    <property type="entry name" value="RIBOSOMAL_S11"/>
    <property type="match status" value="1"/>
</dbReference>
<comment type="function">
    <text evidence="1">Located on the platform of the 30S subunit, it bridges several disparate RNA helices of the 16S rRNA. Forms part of the Shine-Dalgarno cleft in the 70S ribosome.</text>
</comment>
<comment type="subunit">
    <text evidence="1">Part of the 30S ribosomal subunit. Interacts with proteins S7 and S18. Binds to IF-3.</text>
</comment>
<comment type="similarity">
    <text evidence="1">Belongs to the universal ribosomal protein uS11 family.</text>
</comment>
<proteinExistence type="inferred from homology"/>